<keyword id="KW-0067">ATP-binding</keyword>
<keyword id="KW-0963">Cytoplasm</keyword>
<keyword id="KW-0436">Ligase</keyword>
<keyword id="KW-0460">Magnesium</keyword>
<keyword id="KW-0479">Metal-binding</keyword>
<keyword id="KW-0547">Nucleotide-binding</keyword>
<keyword id="KW-0658">Purine biosynthesis</keyword>
<name>PURL_PARMW</name>
<dbReference type="EC" id="6.3.5.3" evidence="1"/>
<dbReference type="EMBL" id="BX569689">
    <property type="protein sequence ID" value="CAE06518.1"/>
    <property type="molecule type" value="Genomic_DNA"/>
</dbReference>
<dbReference type="RefSeq" id="WP_011126884.1">
    <property type="nucleotide sequence ID" value="NC_005070.1"/>
</dbReference>
<dbReference type="SMR" id="Q7UA92"/>
<dbReference type="STRING" id="84588.SYNW0003"/>
<dbReference type="KEGG" id="syw:SYNW0003"/>
<dbReference type="eggNOG" id="COG0046">
    <property type="taxonomic scope" value="Bacteria"/>
</dbReference>
<dbReference type="HOGENOM" id="CLU_003100_0_1_3"/>
<dbReference type="UniPathway" id="UPA00074">
    <property type="reaction ID" value="UER00128"/>
</dbReference>
<dbReference type="Proteomes" id="UP000001422">
    <property type="component" value="Chromosome"/>
</dbReference>
<dbReference type="GO" id="GO:0005737">
    <property type="term" value="C:cytoplasm"/>
    <property type="evidence" value="ECO:0007669"/>
    <property type="project" value="UniProtKB-SubCell"/>
</dbReference>
<dbReference type="GO" id="GO:0005524">
    <property type="term" value="F:ATP binding"/>
    <property type="evidence" value="ECO:0007669"/>
    <property type="project" value="UniProtKB-UniRule"/>
</dbReference>
<dbReference type="GO" id="GO:0000287">
    <property type="term" value="F:magnesium ion binding"/>
    <property type="evidence" value="ECO:0007669"/>
    <property type="project" value="UniProtKB-UniRule"/>
</dbReference>
<dbReference type="GO" id="GO:0004642">
    <property type="term" value="F:phosphoribosylformylglycinamidine synthase activity"/>
    <property type="evidence" value="ECO:0007669"/>
    <property type="project" value="UniProtKB-UniRule"/>
</dbReference>
<dbReference type="GO" id="GO:0006189">
    <property type="term" value="P:'de novo' IMP biosynthetic process"/>
    <property type="evidence" value="ECO:0007669"/>
    <property type="project" value="UniProtKB-UniRule"/>
</dbReference>
<dbReference type="CDD" id="cd02203">
    <property type="entry name" value="PurL_repeat1"/>
    <property type="match status" value="1"/>
</dbReference>
<dbReference type="CDD" id="cd02204">
    <property type="entry name" value="PurL_repeat2"/>
    <property type="match status" value="1"/>
</dbReference>
<dbReference type="FunFam" id="3.30.1330.10:FF:000004">
    <property type="entry name" value="Phosphoribosylformylglycinamidine synthase subunit PurL"/>
    <property type="match status" value="1"/>
</dbReference>
<dbReference type="Gene3D" id="3.90.650.10">
    <property type="entry name" value="PurM-like C-terminal domain"/>
    <property type="match status" value="2"/>
</dbReference>
<dbReference type="Gene3D" id="3.30.1330.10">
    <property type="entry name" value="PurM-like, N-terminal domain"/>
    <property type="match status" value="2"/>
</dbReference>
<dbReference type="HAMAP" id="MF_00420">
    <property type="entry name" value="PurL_2"/>
    <property type="match status" value="1"/>
</dbReference>
<dbReference type="InterPro" id="IPR010074">
    <property type="entry name" value="PRibForGlyAmidine_synth_PurL"/>
</dbReference>
<dbReference type="InterPro" id="IPR041609">
    <property type="entry name" value="PurL_linker"/>
</dbReference>
<dbReference type="InterPro" id="IPR010918">
    <property type="entry name" value="PurM-like_C_dom"/>
</dbReference>
<dbReference type="InterPro" id="IPR036676">
    <property type="entry name" value="PurM-like_C_sf"/>
</dbReference>
<dbReference type="InterPro" id="IPR016188">
    <property type="entry name" value="PurM-like_N"/>
</dbReference>
<dbReference type="InterPro" id="IPR036921">
    <property type="entry name" value="PurM-like_N_sf"/>
</dbReference>
<dbReference type="NCBIfam" id="TIGR01736">
    <property type="entry name" value="FGAM_synth_II"/>
    <property type="match status" value="1"/>
</dbReference>
<dbReference type="NCBIfam" id="NF002290">
    <property type="entry name" value="PRK01213.1"/>
    <property type="match status" value="1"/>
</dbReference>
<dbReference type="PANTHER" id="PTHR43555">
    <property type="entry name" value="PHOSPHORIBOSYLFORMYLGLYCINAMIDINE SYNTHASE SUBUNIT PURL"/>
    <property type="match status" value="1"/>
</dbReference>
<dbReference type="PANTHER" id="PTHR43555:SF1">
    <property type="entry name" value="PHOSPHORIBOSYLFORMYLGLYCINAMIDINE SYNTHASE SUBUNIT PURL"/>
    <property type="match status" value="1"/>
</dbReference>
<dbReference type="Pfam" id="PF00586">
    <property type="entry name" value="AIRS"/>
    <property type="match status" value="2"/>
</dbReference>
<dbReference type="Pfam" id="PF02769">
    <property type="entry name" value="AIRS_C"/>
    <property type="match status" value="2"/>
</dbReference>
<dbReference type="Pfam" id="PF18072">
    <property type="entry name" value="FGAR-AT_linker"/>
    <property type="match status" value="1"/>
</dbReference>
<dbReference type="PIRSF" id="PIRSF001587">
    <property type="entry name" value="FGAM_synthase_II"/>
    <property type="match status" value="1"/>
</dbReference>
<dbReference type="SUPFAM" id="SSF56042">
    <property type="entry name" value="PurM C-terminal domain-like"/>
    <property type="match status" value="2"/>
</dbReference>
<dbReference type="SUPFAM" id="SSF55326">
    <property type="entry name" value="PurM N-terminal domain-like"/>
    <property type="match status" value="2"/>
</dbReference>
<feature type="chain" id="PRO_0000100499" description="Phosphoribosylformylglycinamidine synthase subunit PurL">
    <location>
        <begin position="1"/>
        <end position="768"/>
    </location>
</feature>
<feature type="active site" evidence="1">
    <location>
        <position position="48"/>
    </location>
</feature>
<feature type="active site" description="Proton acceptor" evidence="1">
    <location>
        <position position="94"/>
    </location>
</feature>
<feature type="binding site" evidence="1">
    <location>
        <position position="51"/>
    </location>
    <ligand>
        <name>ATP</name>
        <dbReference type="ChEBI" id="CHEBI:30616"/>
    </ligand>
</feature>
<feature type="binding site" evidence="1">
    <location>
        <position position="90"/>
    </location>
    <ligand>
        <name>ATP</name>
        <dbReference type="ChEBI" id="CHEBI:30616"/>
    </ligand>
</feature>
<feature type="binding site" evidence="1">
    <location>
        <position position="92"/>
    </location>
    <ligand>
        <name>Mg(2+)</name>
        <dbReference type="ChEBI" id="CHEBI:18420"/>
        <label>1</label>
    </ligand>
</feature>
<feature type="binding site" evidence="1">
    <location>
        <begin position="93"/>
        <end position="96"/>
    </location>
    <ligand>
        <name>substrate</name>
    </ligand>
</feature>
<feature type="binding site" evidence="1">
    <location>
        <position position="115"/>
    </location>
    <ligand>
        <name>substrate</name>
    </ligand>
</feature>
<feature type="binding site" evidence="1">
    <location>
        <position position="116"/>
    </location>
    <ligand>
        <name>Mg(2+)</name>
        <dbReference type="ChEBI" id="CHEBI:18420"/>
        <label>2</label>
    </ligand>
</feature>
<feature type="binding site" evidence="1">
    <location>
        <position position="239"/>
    </location>
    <ligand>
        <name>substrate</name>
    </ligand>
</feature>
<feature type="binding site" evidence="1">
    <location>
        <position position="267"/>
    </location>
    <ligand>
        <name>Mg(2+)</name>
        <dbReference type="ChEBI" id="CHEBI:18420"/>
        <label>2</label>
    </ligand>
</feature>
<feature type="binding site" evidence="1">
    <location>
        <begin position="311"/>
        <end position="313"/>
    </location>
    <ligand>
        <name>substrate</name>
    </ligand>
</feature>
<feature type="binding site" evidence="1">
    <location>
        <position position="507"/>
    </location>
    <ligand>
        <name>ATP</name>
        <dbReference type="ChEBI" id="CHEBI:30616"/>
    </ligand>
</feature>
<feature type="binding site" evidence="1">
    <location>
        <position position="544"/>
    </location>
    <ligand>
        <name>ATP</name>
        <dbReference type="ChEBI" id="CHEBI:30616"/>
    </ligand>
</feature>
<feature type="binding site" evidence="1">
    <location>
        <position position="545"/>
    </location>
    <ligand>
        <name>Mg(2+)</name>
        <dbReference type="ChEBI" id="CHEBI:18420"/>
        <label>1</label>
    </ligand>
</feature>
<feature type="binding site" evidence="1">
    <location>
        <position position="547"/>
    </location>
    <ligand>
        <name>substrate</name>
    </ligand>
</feature>
<comment type="function">
    <text evidence="1">Part of the phosphoribosylformylglycinamidine synthase complex involved in the purines biosynthetic pathway. Catalyzes the ATP-dependent conversion of formylglycinamide ribonucleotide (FGAR) and glutamine to yield formylglycinamidine ribonucleotide (FGAM) and glutamate. The FGAM synthase complex is composed of three subunits. PurQ produces an ammonia molecule by converting glutamine to glutamate. PurL transfers the ammonia molecule to FGAR to form FGAM in an ATP-dependent manner. PurS interacts with PurQ and PurL and is thought to assist in the transfer of the ammonia molecule from PurQ to PurL.</text>
</comment>
<comment type="catalytic activity">
    <reaction evidence="1">
        <text>N(2)-formyl-N(1)-(5-phospho-beta-D-ribosyl)glycinamide + L-glutamine + ATP + H2O = 2-formamido-N(1)-(5-O-phospho-beta-D-ribosyl)acetamidine + L-glutamate + ADP + phosphate + H(+)</text>
        <dbReference type="Rhea" id="RHEA:17129"/>
        <dbReference type="ChEBI" id="CHEBI:15377"/>
        <dbReference type="ChEBI" id="CHEBI:15378"/>
        <dbReference type="ChEBI" id="CHEBI:29985"/>
        <dbReference type="ChEBI" id="CHEBI:30616"/>
        <dbReference type="ChEBI" id="CHEBI:43474"/>
        <dbReference type="ChEBI" id="CHEBI:58359"/>
        <dbReference type="ChEBI" id="CHEBI:147286"/>
        <dbReference type="ChEBI" id="CHEBI:147287"/>
        <dbReference type="ChEBI" id="CHEBI:456216"/>
        <dbReference type="EC" id="6.3.5.3"/>
    </reaction>
</comment>
<comment type="pathway">
    <text evidence="1">Purine metabolism; IMP biosynthesis via de novo pathway; 5-amino-1-(5-phospho-D-ribosyl)imidazole from N(2)-formyl-N(1)-(5-phospho-D-ribosyl)glycinamide: step 1/2.</text>
</comment>
<comment type="subunit">
    <text evidence="1">Monomer. Part of the FGAM synthase complex composed of 1 PurL, 1 PurQ and 2 PurS subunits.</text>
</comment>
<comment type="subcellular location">
    <subcellularLocation>
        <location evidence="1">Cytoplasm</location>
    </subcellularLocation>
</comment>
<comment type="similarity">
    <text evidence="1">Belongs to the FGAMS family.</text>
</comment>
<sequence>MSSPAYDVIAALKQEGLKPSDWQEICRRLGREPNRAELGMFGVMWSEHCCYRNSRPLLRGFPTEGPRILVGPGENAGVVDLGEGHRLAFKIESHNHPSAVEPFQGAATGVGGILRDIFTMGARPIALLNALRFGPLEDPVNVGLIEGVVAGIAHYGNCVGVPTVGGEVAFDPSYGGNPLVNAMALGLMETEEIVKSGAQGVGNPVVYVGSTTGRDGMGGASFASAELSADSLDDRPAVQVGDPFLEKGLIEACLEAFSGGDVVAAQDMGAAGLTCSCSEMAAKGGLGVELDLDRVPAREEGMTAYEFLLSESQERMLFVVKAGREEALMQRFRRWGLQAAVVGQVLQEPLVRVLHHGEVAAEVPATALADDTPIEQHELLQEPPADLQELWQWQESQLPALDDPASVLLTLLDDPTIASKRWVHRQYDQQVLANTVVSSGAADAAVVRLRPQQGQGSMESVQRGVAATVDCPNRWVALDPERGAQAAVAEAARNLSCVGAEPLAITDNLNFPSPETPKGYWQLAMACRGIAEACRALNTPVTGGNVSLYNETRRDDGTLQPIHPTPVVGMVGLVENIERVVGLGWRQPGDAVLLLGVAPDEQGDDRLGLAGSSYQMLVSGVLAGRPPRVDFELERGVQQLLRQAIDAGLLASAHDSSDGGLAVALAESSIASSLGVELKLNGRPEGLTRTLFAEGGARVAISVKAECRPQWDQLAAESTVPITELGVVNDGSTFRIHCGEKDVQWSLADLKRAHQEGLPRRIGGEAES</sequence>
<protein>
    <recommendedName>
        <fullName evidence="1">Phosphoribosylformylglycinamidine synthase subunit PurL</fullName>
        <shortName evidence="1">FGAM synthase</shortName>
        <ecNumber evidence="1">6.3.5.3</ecNumber>
    </recommendedName>
    <alternativeName>
        <fullName evidence="1">Formylglycinamide ribonucleotide amidotransferase subunit II</fullName>
        <shortName evidence="1">FGAR amidotransferase II</shortName>
        <shortName evidence="1">FGAR-AT II</shortName>
    </alternativeName>
    <alternativeName>
        <fullName evidence="1">Glutamine amidotransferase PurL</fullName>
    </alternativeName>
    <alternativeName>
        <fullName evidence="1">Phosphoribosylformylglycinamidine synthase subunit II</fullName>
    </alternativeName>
</protein>
<evidence type="ECO:0000255" key="1">
    <source>
        <dbReference type="HAMAP-Rule" id="MF_00420"/>
    </source>
</evidence>
<organism>
    <name type="scientific">Parasynechococcus marenigrum (strain WH8102)</name>
    <dbReference type="NCBI Taxonomy" id="84588"/>
    <lineage>
        <taxon>Bacteria</taxon>
        <taxon>Bacillati</taxon>
        <taxon>Cyanobacteriota</taxon>
        <taxon>Cyanophyceae</taxon>
        <taxon>Synechococcales</taxon>
        <taxon>Prochlorococcaceae</taxon>
        <taxon>Parasynechococcus</taxon>
        <taxon>Parasynechococcus marenigrum</taxon>
    </lineage>
</organism>
<accession>Q7UA92</accession>
<gene>
    <name evidence="1" type="primary">purL</name>
    <name type="ordered locus">SYNW0003</name>
</gene>
<reference key="1">
    <citation type="journal article" date="2003" name="Nature">
        <title>The genome of a motile marine Synechococcus.</title>
        <authorList>
            <person name="Palenik B."/>
            <person name="Brahamsha B."/>
            <person name="Larimer F.W."/>
            <person name="Land M.L."/>
            <person name="Hauser L."/>
            <person name="Chain P."/>
            <person name="Lamerdin J.E."/>
            <person name="Regala W."/>
            <person name="Allen E.E."/>
            <person name="McCarren J."/>
            <person name="Paulsen I.T."/>
            <person name="Dufresne A."/>
            <person name="Partensky F."/>
            <person name="Webb E.A."/>
            <person name="Waterbury J."/>
        </authorList>
    </citation>
    <scope>NUCLEOTIDE SEQUENCE [LARGE SCALE GENOMIC DNA]</scope>
    <source>
        <strain>WH8102</strain>
    </source>
</reference>
<proteinExistence type="inferred from homology"/>